<feature type="chain" id="PRO_0000321770" description="Endoribonuclease YbeY">
    <location>
        <begin position="1"/>
        <end position="163"/>
    </location>
</feature>
<feature type="binding site" evidence="1">
    <location>
        <position position="119"/>
    </location>
    <ligand>
        <name>Zn(2+)</name>
        <dbReference type="ChEBI" id="CHEBI:29105"/>
        <note>catalytic</note>
    </ligand>
</feature>
<feature type="binding site" evidence="1">
    <location>
        <position position="123"/>
    </location>
    <ligand>
        <name>Zn(2+)</name>
        <dbReference type="ChEBI" id="CHEBI:29105"/>
        <note>catalytic</note>
    </ligand>
</feature>
<feature type="binding site" evidence="1">
    <location>
        <position position="129"/>
    </location>
    <ligand>
        <name>Zn(2+)</name>
        <dbReference type="ChEBI" id="CHEBI:29105"/>
        <note>catalytic</note>
    </ligand>
</feature>
<proteinExistence type="inferred from homology"/>
<keyword id="KW-0963">Cytoplasm</keyword>
<keyword id="KW-0255">Endonuclease</keyword>
<keyword id="KW-0378">Hydrolase</keyword>
<keyword id="KW-0479">Metal-binding</keyword>
<keyword id="KW-0540">Nuclease</keyword>
<keyword id="KW-1185">Reference proteome</keyword>
<keyword id="KW-0690">Ribosome biogenesis</keyword>
<keyword id="KW-0698">rRNA processing</keyword>
<keyword id="KW-0862">Zinc</keyword>
<reference key="1">
    <citation type="journal article" date="2008" name="J. Bacteriol.">
        <title>The complete genome sequence of Actinobacillus pleuropneumoniae L20 (serotype 5b).</title>
        <authorList>
            <person name="Foote S.J."/>
            <person name="Bosse J.T."/>
            <person name="Bouevitch A.B."/>
            <person name="Langford P.R."/>
            <person name="Young N.M."/>
            <person name="Nash J.H.E."/>
        </authorList>
    </citation>
    <scope>NUCLEOTIDE SEQUENCE [LARGE SCALE GENOMIC DNA]</scope>
    <source>
        <strain>L20</strain>
    </source>
</reference>
<protein>
    <recommendedName>
        <fullName evidence="1">Endoribonuclease YbeY</fullName>
        <ecNumber evidence="1">3.1.-.-</ecNumber>
    </recommendedName>
</protein>
<evidence type="ECO:0000255" key="1">
    <source>
        <dbReference type="HAMAP-Rule" id="MF_00009"/>
    </source>
</evidence>
<organism>
    <name type="scientific">Actinobacillus pleuropneumoniae serotype 5b (strain L20)</name>
    <dbReference type="NCBI Taxonomy" id="416269"/>
    <lineage>
        <taxon>Bacteria</taxon>
        <taxon>Pseudomonadati</taxon>
        <taxon>Pseudomonadota</taxon>
        <taxon>Gammaproteobacteria</taxon>
        <taxon>Pasteurellales</taxon>
        <taxon>Pasteurellaceae</taxon>
        <taxon>Actinobacillus</taxon>
    </lineage>
</organism>
<sequence>MTTPIIDLQIAAENSENLPSLAQFTQWVQRALAHEAQTEDFPETEITIRIVDEAESYELNLTYRGKDKPTNVLSFPFEVPEGIELPLLGDLIICRQVVEKEAQEQQISLESHWAHLAIHGTLHLLGYDHIEDAEAEEMEGLETEIMQSLGFEDPYISEKVIEE</sequence>
<gene>
    <name evidence="1" type="primary">ybeY</name>
    <name type="ordered locus">APL_0694</name>
</gene>
<accession>A3N058</accession>
<dbReference type="EC" id="3.1.-.-" evidence="1"/>
<dbReference type="EMBL" id="CP000569">
    <property type="protein sequence ID" value="ABN73794.1"/>
    <property type="molecule type" value="Genomic_DNA"/>
</dbReference>
<dbReference type="RefSeq" id="WP_005617189.1">
    <property type="nucleotide sequence ID" value="NC_009053.1"/>
</dbReference>
<dbReference type="SMR" id="A3N058"/>
<dbReference type="STRING" id="416269.APL_0694"/>
<dbReference type="EnsemblBacteria" id="ABN73794">
    <property type="protein sequence ID" value="ABN73794"/>
    <property type="gene ID" value="APL_0694"/>
</dbReference>
<dbReference type="KEGG" id="apl:APL_0694"/>
<dbReference type="eggNOG" id="COG0319">
    <property type="taxonomic scope" value="Bacteria"/>
</dbReference>
<dbReference type="HOGENOM" id="CLU_106710_0_1_6"/>
<dbReference type="Proteomes" id="UP000001432">
    <property type="component" value="Chromosome"/>
</dbReference>
<dbReference type="GO" id="GO:0005737">
    <property type="term" value="C:cytoplasm"/>
    <property type="evidence" value="ECO:0007669"/>
    <property type="project" value="UniProtKB-SubCell"/>
</dbReference>
<dbReference type="GO" id="GO:0004222">
    <property type="term" value="F:metalloendopeptidase activity"/>
    <property type="evidence" value="ECO:0007669"/>
    <property type="project" value="InterPro"/>
</dbReference>
<dbReference type="GO" id="GO:0004521">
    <property type="term" value="F:RNA endonuclease activity"/>
    <property type="evidence" value="ECO:0007669"/>
    <property type="project" value="UniProtKB-UniRule"/>
</dbReference>
<dbReference type="GO" id="GO:0008270">
    <property type="term" value="F:zinc ion binding"/>
    <property type="evidence" value="ECO:0007669"/>
    <property type="project" value="UniProtKB-UniRule"/>
</dbReference>
<dbReference type="GO" id="GO:0006364">
    <property type="term" value="P:rRNA processing"/>
    <property type="evidence" value="ECO:0007669"/>
    <property type="project" value="UniProtKB-UniRule"/>
</dbReference>
<dbReference type="Gene3D" id="3.40.390.30">
    <property type="entry name" value="Metalloproteases ('zincins'), catalytic domain"/>
    <property type="match status" value="1"/>
</dbReference>
<dbReference type="HAMAP" id="MF_00009">
    <property type="entry name" value="Endoribonucl_YbeY"/>
    <property type="match status" value="1"/>
</dbReference>
<dbReference type="InterPro" id="IPR023091">
    <property type="entry name" value="MetalPrtase_cat_dom_sf_prd"/>
</dbReference>
<dbReference type="InterPro" id="IPR002036">
    <property type="entry name" value="YbeY"/>
</dbReference>
<dbReference type="InterPro" id="IPR020549">
    <property type="entry name" value="YbeY_CS"/>
</dbReference>
<dbReference type="NCBIfam" id="TIGR00043">
    <property type="entry name" value="rRNA maturation RNase YbeY"/>
    <property type="match status" value="1"/>
</dbReference>
<dbReference type="PANTHER" id="PTHR46986">
    <property type="entry name" value="ENDORIBONUCLEASE YBEY, CHLOROPLASTIC"/>
    <property type="match status" value="1"/>
</dbReference>
<dbReference type="PANTHER" id="PTHR46986:SF1">
    <property type="entry name" value="ENDORIBONUCLEASE YBEY, CHLOROPLASTIC"/>
    <property type="match status" value="1"/>
</dbReference>
<dbReference type="Pfam" id="PF02130">
    <property type="entry name" value="YbeY"/>
    <property type="match status" value="1"/>
</dbReference>
<dbReference type="SUPFAM" id="SSF55486">
    <property type="entry name" value="Metalloproteases ('zincins'), catalytic domain"/>
    <property type="match status" value="1"/>
</dbReference>
<dbReference type="PROSITE" id="PS01306">
    <property type="entry name" value="UPF0054"/>
    <property type="match status" value="1"/>
</dbReference>
<name>YBEY_ACTP2</name>
<comment type="function">
    <text evidence="1">Single strand-specific metallo-endoribonuclease involved in late-stage 70S ribosome quality control and in maturation of the 3' terminus of the 16S rRNA.</text>
</comment>
<comment type="cofactor">
    <cofactor evidence="1">
        <name>Zn(2+)</name>
        <dbReference type="ChEBI" id="CHEBI:29105"/>
    </cofactor>
    <text evidence="1">Binds 1 zinc ion.</text>
</comment>
<comment type="subcellular location">
    <subcellularLocation>
        <location evidence="1">Cytoplasm</location>
    </subcellularLocation>
</comment>
<comment type="similarity">
    <text evidence="1">Belongs to the endoribonuclease YbeY family.</text>
</comment>